<protein>
    <recommendedName>
        <fullName evidence="1">Histidine--tRNA ligase</fullName>
        <ecNumber evidence="1">6.1.1.21</ecNumber>
    </recommendedName>
    <alternativeName>
        <fullName evidence="1">Histidyl-tRNA synthetase</fullName>
        <shortName evidence="1">HisRS</shortName>
    </alternativeName>
</protein>
<feature type="chain" id="PRO_0000136297" description="Histidine--tRNA ligase">
    <location>
        <begin position="1"/>
        <end position="413"/>
    </location>
</feature>
<name>SYH_WOLTR</name>
<accession>Q5GSM4</accession>
<gene>
    <name evidence="1" type="primary">hisS</name>
    <name type="ordered locus">Wbm0412</name>
</gene>
<sequence>MTNQTVRGTKDLLFDEWYRFKYIQQIANRISSLYGFLPAQTPIFEYTEVFMKTLGDGSDIINKEMYTFYDKGGKSITLRPEFTAAIVRLLVEKKLQIPIKLFSTGPAFRYERPQKGRQRQFHQINFEVFGVENPKADIELISLAHHLLTEFNISKNVRLEINSLGDSETIAKYKEVLIPYFKKFQNDLSEDSQNRLTKNPLRILDSKDEKDKLIISDAPKISDYYTRESSDFFEQILNGLTALNIPCTVNSKLVRGLDYYCHTVFEFVIEDFGAQGAVFAGGRYDNLVSSVGGKYTPAIGFAGGIERIMELINYSMKGDRPICLVPIGREAEEHALTLANELRRNGLYVIYEYNGALKNRMKKASQANAKAALIFGNEELGSKTLKIKNMDTGEEKIIAYGNIMENIHQTLLV</sequence>
<comment type="catalytic activity">
    <reaction evidence="1">
        <text>tRNA(His) + L-histidine + ATP = L-histidyl-tRNA(His) + AMP + diphosphate + H(+)</text>
        <dbReference type="Rhea" id="RHEA:17313"/>
        <dbReference type="Rhea" id="RHEA-COMP:9665"/>
        <dbReference type="Rhea" id="RHEA-COMP:9689"/>
        <dbReference type="ChEBI" id="CHEBI:15378"/>
        <dbReference type="ChEBI" id="CHEBI:30616"/>
        <dbReference type="ChEBI" id="CHEBI:33019"/>
        <dbReference type="ChEBI" id="CHEBI:57595"/>
        <dbReference type="ChEBI" id="CHEBI:78442"/>
        <dbReference type="ChEBI" id="CHEBI:78527"/>
        <dbReference type="ChEBI" id="CHEBI:456215"/>
        <dbReference type="EC" id="6.1.1.21"/>
    </reaction>
</comment>
<comment type="subunit">
    <text evidence="1">Homodimer.</text>
</comment>
<comment type="subcellular location">
    <subcellularLocation>
        <location evidence="1">Cytoplasm</location>
    </subcellularLocation>
</comment>
<comment type="similarity">
    <text evidence="1">Belongs to the class-II aminoacyl-tRNA synthetase family.</text>
</comment>
<proteinExistence type="inferred from homology"/>
<reference key="1">
    <citation type="journal article" date="2005" name="PLoS Biol.">
        <title>The Wolbachia genome of Brugia malayi: endosymbiont evolution within a human pathogenic nematode.</title>
        <authorList>
            <person name="Foster J."/>
            <person name="Ganatra M."/>
            <person name="Kamal I."/>
            <person name="Ware J."/>
            <person name="Makarova K."/>
            <person name="Ivanova N."/>
            <person name="Bhattacharyya A."/>
            <person name="Kapatral V."/>
            <person name="Kumar S."/>
            <person name="Posfai J."/>
            <person name="Vincze T."/>
            <person name="Ingram J."/>
            <person name="Moran L."/>
            <person name="Lapidus A."/>
            <person name="Omelchenko M."/>
            <person name="Kyrpides N."/>
            <person name="Ghedin E."/>
            <person name="Wang S."/>
            <person name="Goltsman E."/>
            <person name="Joukov V."/>
            <person name="Ostrovskaya O."/>
            <person name="Tsukerman K."/>
            <person name="Mazur M."/>
            <person name="Comb D."/>
            <person name="Koonin E."/>
            <person name="Slatko B."/>
        </authorList>
    </citation>
    <scope>NUCLEOTIDE SEQUENCE [LARGE SCALE GENOMIC DNA]</scope>
    <source>
        <strain>TRS</strain>
    </source>
</reference>
<organism>
    <name type="scientific">Wolbachia sp. subsp. Brugia malayi (strain TRS)</name>
    <dbReference type="NCBI Taxonomy" id="292805"/>
    <lineage>
        <taxon>Bacteria</taxon>
        <taxon>Pseudomonadati</taxon>
        <taxon>Pseudomonadota</taxon>
        <taxon>Alphaproteobacteria</taxon>
        <taxon>Rickettsiales</taxon>
        <taxon>Anaplasmataceae</taxon>
        <taxon>Wolbachieae</taxon>
        <taxon>Wolbachia</taxon>
    </lineage>
</organism>
<evidence type="ECO:0000255" key="1">
    <source>
        <dbReference type="HAMAP-Rule" id="MF_00127"/>
    </source>
</evidence>
<keyword id="KW-0030">Aminoacyl-tRNA synthetase</keyword>
<keyword id="KW-0067">ATP-binding</keyword>
<keyword id="KW-0963">Cytoplasm</keyword>
<keyword id="KW-0436">Ligase</keyword>
<keyword id="KW-0547">Nucleotide-binding</keyword>
<keyword id="KW-0648">Protein biosynthesis</keyword>
<keyword id="KW-1185">Reference proteome</keyword>
<dbReference type="EC" id="6.1.1.21" evidence="1"/>
<dbReference type="EMBL" id="AE017321">
    <property type="protein sequence ID" value="AAW71000.1"/>
    <property type="molecule type" value="Genomic_DNA"/>
</dbReference>
<dbReference type="RefSeq" id="WP_011256610.1">
    <property type="nucleotide sequence ID" value="NC_006833.1"/>
</dbReference>
<dbReference type="SMR" id="Q5GSM4"/>
<dbReference type="STRING" id="292805.Wbm0412"/>
<dbReference type="KEGG" id="wbm:Wbm0412"/>
<dbReference type="eggNOG" id="COG0124">
    <property type="taxonomic scope" value="Bacteria"/>
</dbReference>
<dbReference type="HOGENOM" id="CLU_025113_1_0_5"/>
<dbReference type="Proteomes" id="UP000000534">
    <property type="component" value="Chromosome"/>
</dbReference>
<dbReference type="GO" id="GO:0005737">
    <property type="term" value="C:cytoplasm"/>
    <property type="evidence" value="ECO:0007669"/>
    <property type="project" value="UniProtKB-SubCell"/>
</dbReference>
<dbReference type="GO" id="GO:0005524">
    <property type="term" value="F:ATP binding"/>
    <property type="evidence" value="ECO:0007669"/>
    <property type="project" value="UniProtKB-UniRule"/>
</dbReference>
<dbReference type="GO" id="GO:0004821">
    <property type="term" value="F:histidine-tRNA ligase activity"/>
    <property type="evidence" value="ECO:0007669"/>
    <property type="project" value="UniProtKB-UniRule"/>
</dbReference>
<dbReference type="GO" id="GO:0006427">
    <property type="term" value="P:histidyl-tRNA aminoacylation"/>
    <property type="evidence" value="ECO:0007669"/>
    <property type="project" value="UniProtKB-UniRule"/>
</dbReference>
<dbReference type="CDD" id="cd00773">
    <property type="entry name" value="HisRS-like_core"/>
    <property type="match status" value="1"/>
</dbReference>
<dbReference type="Gene3D" id="3.40.50.800">
    <property type="entry name" value="Anticodon-binding domain"/>
    <property type="match status" value="1"/>
</dbReference>
<dbReference type="Gene3D" id="3.30.930.10">
    <property type="entry name" value="Bira Bifunctional Protein, Domain 2"/>
    <property type="match status" value="1"/>
</dbReference>
<dbReference type="HAMAP" id="MF_00127">
    <property type="entry name" value="His_tRNA_synth"/>
    <property type="match status" value="1"/>
</dbReference>
<dbReference type="InterPro" id="IPR006195">
    <property type="entry name" value="aa-tRNA-synth_II"/>
</dbReference>
<dbReference type="InterPro" id="IPR045864">
    <property type="entry name" value="aa-tRNA-synth_II/BPL/LPL"/>
</dbReference>
<dbReference type="InterPro" id="IPR004154">
    <property type="entry name" value="Anticodon-bd"/>
</dbReference>
<dbReference type="InterPro" id="IPR036621">
    <property type="entry name" value="Anticodon-bd_dom_sf"/>
</dbReference>
<dbReference type="InterPro" id="IPR015807">
    <property type="entry name" value="His-tRNA-ligase"/>
</dbReference>
<dbReference type="InterPro" id="IPR041715">
    <property type="entry name" value="HisRS-like_core"/>
</dbReference>
<dbReference type="InterPro" id="IPR004516">
    <property type="entry name" value="HisRS/HisZ"/>
</dbReference>
<dbReference type="NCBIfam" id="TIGR00442">
    <property type="entry name" value="hisS"/>
    <property type="match status" value="1"/>
</dbReference>
<dbReference type="PANTHER" id="PTHR43707:SF1">
    <property type="entry name" value="HISTIDINE--TRNA LIGASE, MITOCHONDRIAL-RELATED"/>
    <property type="match status" value="1"/>
</dbReference>
<dbReference type="PANTHER" id="PTHR43707">
    <property type="entry name" value="HISTIDYL-TRNA SYNTHETASE"/>
    <property type="match status" value="1"/>
</dbReference>
<dbReference type="Pfam" id="PF03129">
    <property type="entry name" value="HGTP_anticodon"/>
    <property type="match status" value="1"/>
</dbReference>
<dbReference type="Pfam" id="PF13393">
    <property type="entry name" value="tRNA-synt_His"/>
    <property type="match status" value="1"/>
</dbReference>
<dbReference type="PIRSF" id="PIRSF001549">
    <property type="entry name" value="His-tRNA_synth"/>
    <property type="match status" value="1"/>
</dbReference>
<dbReference type="SUPFAM" id="SSF52954">
    <property type="entry name" value="Class II aaRS ABD-related"/>
    <property type="match status" value="1"/>
</dbReference>
<dbReference type="SUPFAM" id="SSF55681">
    <property type="entry name" value="Class II aaRS and biotin synthetases"/>
    <property type="match status" value="1"/>
</dbReference>
<dbReference type="PROSITE" id="PS50862">
    <property type="entry name" value="AA_TRNA_LIGASE_II"/>
    <property type="match status" value="1"/>
</dbReference>